<proteinExistence type="inferred from homology"/>
<comment type="function">
    <text evidence="1">Catalyzes the synthesis of the hydroxymethylpyrimidine phosphate (HMP-P) moiety of thiamine from aminoimidazole ribotide (AIR) in a radical S-adenosyl-L-methionine (SAM)-dependent reaction.</text>
</comment>
<comment type="catalytic activity">
    <reaction evidence="1">
        <text>5-amino-1-(5-phospho-beta-D-ribosyl)imidazole + S-adenosyl-L-methionine = 4-amino-2-methyl-5-(phosphooxymethyl)pyrimidine + CO + 5'-deoxyadenosine + formate + L-methionine + 3 H(+)</text>
        <dbReference type="Rhea" id="RHEA:24840"/>
        <dbReference type="ChEBI" id="CHEBI:15378"/>
        <dbReference type="ChEBI" id="CHEBI:15740"/>
        <dbReference type="ChEBI" id="CHEBI:17245"/>
        <dbReference type="ChEBI" id="CHEBI:17319"/>
        <dbReference type="ChEBI" id="CHEBI:57844"/>
        <dbReference type="ChEBI" id="CHEBI:58354"/>
        <dbReference type="ChEBI" id="CHEBI:59789"/>
        <dbReference type="ChEBI" id="CHEBI:137981"/>
        <dbReference type="EC" id="4.1.99.17"/>
    </reaction>
</comment>
<comment type="cofactor">
    <cofactor evidence="1">
        <name>[4Fe-4S] cluster</name>
        <dbReference type="ChEBI" id="CHEBI:49883"/>
    </cofactor>
    <text evidence="1">Binds 1 [4Fe-4S] cluster per subunit. The cluster is coordinated with 3 cysteines and an exchangeable S-adenosyl-L-methionine.</text>
</comment>
<comment type="pathway">
    <text evidence="1">Cofactor biosynthesis; thiamine diphosphate biosynthesis.</text>
</comment>
<comment type="similarity">
    <text evidence="1">Belongs to the ThiC family.</text>
</comment>
<sequence length="547" mass="59840">MTETLSKTTEPSVTTGPIPGSSKAYREVANPDGGPSLRVPFRRVHLSTGAHFDLYDTSGPYTDPDAVINLTAGLPPRPGVIRDRGTQLQRARAGEITAEMAFIADREGMPAELVRVEVALGRAVIPANHNHPEIEPMIIGKAFAVKVNANIGNSAVTSSIAEEIDKMVWATRWGADTIMDLSTGKNIHETREWILRNSPVPVGTVPIYQALEKVKGDPTKLTWEIYRDTVIEQCEQGVDYMTVHAGVLLRYVLLTAKRVTGIVSRGGSIMASWCLANHRESFLYTNFAELCDIFARYDVTFSLGDGLRPGSIADANDTAQFAELRTLGELSKIAKVHGAQVMIEGPGHIPMHKIVENVRLEEELCEEAPFYTLGPLATDIAPAYDHITSAIGAAVIAQAGTAMLCYVTPKEHLGLPDRKDVKDGVIAYKIAAHAADLAKGYPRAQERDDALSTARFEFRWNDQFALSLDPPTAREFHDETLPAEPAKTAHFCSMCGPKFCSMRITADIRVYAAKHGLDTEEAIEMGMTEKSAEFAEHGNRVYLPLTQ</sequence>
<accession>B8ZU90</accession>
<name>THIC_MYCLB</name>
<evidence type="ECO:0000255" key="1">
    <source>
        <dbReference type="HAMAP-Rule" id="MF_00089"/>
    </source>
</evidence>
<evidence type="ECO:0000256" key="2">
    <source>
        <dbReference type="SAM" id="MobiDB-lite"/>
    </source>
</evidence>
<keyword id="KW-0004">4Fe-4S</keyword>
<keyword id="KW-0408">Iron</keyword>
<keyword id="KW-0411">Iron-sulfur</keyword>
<keyword id="KW-0456">Lyase</keyword>
<keyword id="KW-0479">Metal-binding</keyword>
<keyword id="KW-0949">S-adenosyl-L-methionine</keyword>
<keyword id="KW-0784">Thiamine biosynthesis</keyword>
<keyword id="KW-0862">Zinc</keyword>
<organism>
    <name type="scientific">Mycobacterium leprae (strain Br4923)</name>
    <dbReference type="NCBI Taxonomy" id="561304"/>
    <lineage>
        <taxon>Bacteria</taxon>
        <taxon>Bacillati</taxon>
        <taxon>Actinomycetota</taxon>
        <taxon>Actinomycetes</taxon>
        <taxon>Mycobacteriales</taxon>
        <taxon>Mycobacteriaceae</taxon>
        <taxon>Mycobacterium</taxon>
    </lineage>
</organism>
<reference key="1">
    <citation type="journal article" date="2009" name="Nat. Genet.">
        <title>Comparative genomic and phylogeographic analysis of Mycobacterium leprae.</title>
        <authorList>
            <person name="Monot M."/>
            <person name="Honore N."/>
            <person name="Garnier T."/>
            <person name="Zidane N."/>
            <person name="Sherafi D."/>
            <person name="Paniz-Mondolfi A."/>
            <person name="Matsuoka M."/>
            <person name="Taylor G.M."/>
            <person name="Donoghue H.D."/>
            <person name="Bouwman A."/>
            <person name="Mays S."/>
            <person name="Watson C."/>
            <person name="Lockwood D."/>
            <person name="Khamispour A."/>
            <person name="Dowlati Y."/>
            <person name="Jianping S."/>
            <person name="Rea T.H."/>
            <person name="Vera-Cabrera L."/>
            <person name="Stefani M.M."/>
            <person name="Banu S."/>
            <person name="Macdonald M."/>
            <person name="Sapkota B.R."/>
            <person name="Spencer J.S."/>
            <person name="Thomas J."/>
            <person name="Harshman K."/>
            <person name="Singh P."/>
            <person name="Busso P."/>
            <person name="Gattiker A."/>
            <person name="Rougemont J."/>
            <person name="Brennan P.J."/>
            <person name="Cole S.T."/>
        </authorList>
    </citation>
    <scope>NUCLEOTIDE SEQUENCE [LARGE SCALE GENOMIC DNA]</scope>
    <source>
        <strain>Br4923</strain>
    </source>
</reference>
<gene>
    <name evidence="1" type="primary">thiC</name>
    <name type="ordered locus">MLBr00294</name>
</gene>
<protein>
    <recommendedName>
        <fullName evidence="1">Phosphomethylpyrimidine synthase</fullName>
        <ecNumber evidence="1">4.1.99.17</ecNumber>
    </recommendedName>
    <alternativeName>
        <fullName evidence="1">Hydroxymethylpyrimidine phosphate synthase</fullName>
        <shortName evidence="1">HMP-P synthase</shortName>
        <shortName evidence="1">HMP-phosphate synthase</shortName>
        <shortName evidence="1">HMPP synthase</shortName>
    </alternativeName>
    <alternativeName>
        <fullName evidence="1">Thiamine biosynthesis protein ThiC</fullName>
    </alternativeName>
</protein>
<dbReference type="EC" id="4.1.99.17" evidence="1"/>
<dbReference type="EMBL" id="FM211192">
    <property type="protein sequence ID" value="CAR70387.1"/>
    <property type="molecule type" value="Genomic_DNA"/>
</dbReference>
<dbReference type="SMR" id="B8ZU90"/>
<dbReference type="KEGG" id="mlb:MLBr00294"/>
<dbReference type="HOGENOM" id="CLU_013181_2_1_11"/>
<dbReference type="UniPathway" id="UPA00060"/>
<dbReference type="Proteomes" id="UP000006900">
    <property type="component" value="Chromosome"/>
</dbReference>
<dbReference type="GO" id="GO:0005829">
    <property type="term" value="C:cytosol"/>
    <property type="evidence" value="ECO:0007669"/>
    <property type="project" value="TreeGrafter"/>
</dbReference>
<dbReference type="GO" id="GO:0051539">
    <property type="term" value="F:4 iron, 4 sulfur cluster binding"/>
    <property type="evidence" value="ECO:0007669"/>
    <property type="project" value="UniProtKB-KW"/>
</dbReference>
<dbReference type="GO" id="GO:0016830">
    <property type="term" value="F:carbon-carbon lyase activity"/>
    <property type="evidence" value="ECO:0007669"/>
    <property type="project" value="InterPro"/>
</dbReference>
<dbReference type="GO" id="GO:0008270">
    <property type="term" value="F:zinc ion binding"/>
    <property type="evidence" value="ECO:0007669"/>
    <property type="project" value="UniProtKB-UniRule"/>
</dbReference>
<dbReference type="GO" id="GO:0009228">
    <property type="term" value="P:thiamine biosynthetic process"/>
    <property type="evidence" value="ECO:0007669"/>
    <property type="project" value="UniProtKB-KW"/>
</dbReference>
<dbReference type="GO" id="GO:0009229">
    <property type="term" value="P:thiamine diphosphate biosynthetic process"/>
    <property type="evidence" value="ECO:0007669"/>
    <property type="project" value="UniProtKB-UniRule"/>
</dbReference>
<dbReference type="FunFam" id="3.20.20.540:FF:000001">
    <property type="entry name" value="Phosphomethylpyrimidine synthase"/>
    <property type="match status" value="1"/>
</dbReference>
<dbReference type="Gene3D" id="6.10.250.620">
    <property type="match status" value="1"/>
</dbReference>
<dbReference type="Gene3D" id="3.20.20.540">
    <property type="entry name" value="Radical SAM ThiC family, central domain"/>
    <property type="match status" value="1"/>
</dbReference>
<dbReference type="HAMAP" id="MF_00089">
    <property type="entry name" value="ThiC"/>
    <property type="match status" value="1"/>
</dbReference>
<dbReference type="InterPro" id="IPR037509">
    <property type="entry name" value="ThiC"/>
</dbReference>
<dbReference type="InterPro" id="IPR025747">
    <property type="entry name" value="ThiC-associated_dom"/>
</dbReference>
<dbReference type="InterPro" id="IPR038521">
    <property type="entry name" value="ThiC/Bza_core_dom"/>
</dbReference>
<dbReference type="InterPro" id="IPR002817">
    <property type="entry name" value="ThiC/BzaA/B"/>
</dbReference>
<dbReference type="NCBIfam" id="NF006763">
    <property type="entry name" value="PRK09284.1"/>
    <property type="match status" value="1"/>
</dbReference>
<dbReference type="NCBIfam" id="NF009895">
    <property type="entry name" value="PRK13352.1"/>
    <property type="match status" value="1"/>
</dbReference>
<dbReference type="NCBIfam" id="TIGR00190">
    <property type="entry name" value="thiC"/>
    <property type="match status" value="1"/>
</dbReference>
<dbReference type="PANTHER" id="PTHR30557:SF1">
    <property type="entry name" value="PHOSPHOMETHYLPYRIMIDINE SYNTHASE, CHLOROPLASTIC"/>
    <property type="match status" value="1"/>
</dbReference>
<dbReference type="PANTHER" id="PTHR30557">
    <property type="entry name" value="THIAMINE BIOSYNTHESIS PROTEIN THIC"/>
    <property type="match status" value="1"/>
</dbReference>
<dbReference type="Pfam" id="PF13667">
    <property type="entry name" value="ThiC-associated"/>
    <property type="match status" value="1"/>
</dbReference>
<dbReference type="Pfam" id="PF01964">
    <property type="entry name" value="ThiC_Rad_SAM"/>
    <property type="match status" value="1"/>
</dbReference>
<dbReference type="SFLD" id="SFLDF00407">
    <property type="entry name" value="phosphomethylpyrimidine_syntha"/>
    <property type="match status" value="1"/>
</dbReference>
<dbReference type="SFLD" id="SFLDG01114">
    <property type="entry name" value="phosphomethylpyrimidine_syntha"/>
    <property type="match status" value="1"/>
</dbReference>
<dbReference type="SFLD" id="SFLDS00113">
    <property type="entry name" value="Radical_SAM_Phosphomethylpyrim"/>
    <property type="match status" value="1"/>
</dbReference>
<feature type="chain" id="PRO_1000198060" description="Phosphomethylpyrimidine synthase">
    <location>
        <begin position="1"/>
        <end position="547"/>
    </location>
</feature>
<feature type="region of interest" description="Disordered" evidence="2">
    <location>
        <begin position="1"/>
        <end position="36"/>
    </location>
</feature>
<feature type="compositionally biased region" description="Polar residues" evidence="2">
    <location>
        <begin position="1"/>
        <end position="15"/>
    </location>
</feature>
<feature type="binding site" evidence="1">
    <location>
        <position position="150"/>
    </location>
    <ligand>
        <name>substrate</name>
    </ligand>
</feature>
<feature type="binding site" evidence="1">
    <location>
        <position position="179"/>
    </location>
    <ligand>
        <name>substrate</name>
    </ligand>
</feature>
<feature type="binding site" evidence="1">
    <location>
        <position position="208"/>
    </location>
    <ligand>
        <name>substrate</name>
    </ligand>
</feature>
<feature type="binding site" evidence="1">
    <location>
        <position position="244"/>
    </location>
    <ligand>
        <name>substrate</name>
    </ligand>
</feature>
<feature type="binding site" evidence="1">
    <location>
        <begin position="264"/>
        <end position="266"/>
    </location>
    <ligand>
        <name>substrate</name>
    </ligand>
</feature>
<feature type="binding site" evidence="1">
    <location>
        <begin position="305"/>
        <end position="308"/>
    </location>
    <ligand>
        <name>substrate</name>
    </ligand>
</feature>
<feature type="binding site" evidence="1">
    <location>
        <position position="344"/>
    </location>
    <ligand>
        <name>substrate</name>
    </ligand>
</feature>
<feature type="binding site" evidence="1">
    <location>
        <position position="348"/>
    </location>
    <ligand>
        <name>Zn(2+)</name>
        <dbReference type="ChEBI" id="CHEBI:29105"/>
    </ligand>
</feature>
<feature type="binding site" evidence="1">
    <location>
        <position position="371"/>
    </location>
    <ligand>
        <name>substrate</name>
    </ligand>
</feature>
<feature type="binding site" evidence="1">
    <location>
        <position position="412"/>
    </location>
    <ligand>
        <name>Zn(2+)</name>
        <dbReference type="ChEBI" id="CHEBI:29105"/>
    </ligand>
</feature>
<feature type="binding site" evidence="1">
    <location>
        <position position="492"/>
    </location>
    <ligand>
        <name>[4Fe-4S] cluster</name>
        <dbReference type="ChEBI" id="CHEBI:49883"/>
        <note>4Fe-4S-S-AdoMet</note>
    </ligand>
</feature>
<feature type="binding site" evidence="1">
    <location>
        <position position="495"/>
    </location>
    <ligand>
        <name>[4Fe-4S] cluster</name>
        <dbReference type="ChEBI" id="CHEBI:49883"/>
        <note>4Fe-4S-S-AdoMet</note>
    </ligand>
</feature>
<feature type="binding site" evidence="1">
    <location>
        <position position="500"/>
    </location>
    <ligand>
        <name>[4Fe-4S] cluster</name>
        <dbReference type="ChEBI" id="CHEBI:49883"/>
        <note>4Fe-4S-S-AdoMet</note>
    </ligand>
</feature>